<feature type="chain" id="PRO_0000352642" description="D-galactonate dehydratase">
    <location>
        <begin position="1"/>
        <end position="382"/>
    </location>
</feature>
<feature type="region of interest" description="Disordered" evidence="3">
    <location>
        <begin position="361"/>
        <end position="382"/>
    </location>
</feature>
<feature type="active site" description="Proton donor" evidence="1">
    <location>
        <position position="185"/>
    </location>
</feature>
<feature type="active site" description="Proton acceptor" evidence="1">
    <location>
        <position position="285"/>
    </location>
</feature>
<feature type="binding site" evidence="2">
    <location>
        <position position="183"/>
    </location>
    <ligand>
        <name>Mg(2+)</name>
        <dbReference type="ChEBI" id="CHEBI:18420"/>
    </ligand>
</feature>
<feature type="binding site" evidence="2">
    <location>
        <position position="209"/>
    </location>
    <ligand>
        <name>Mg(2+)</name>
        <dbReference type="ChEBI" id="CHEBI:18420"/>
    </ligand>
</feature>
<feature type="binding site" evidence="2">
    <location>
        <position position="235"/>
    </location>
    <ligand>
        <name>Mg(2+)</name>
        <dbReference type="ChEBI" id="CHEBI:18420"/>
    </ligand>
</feature>
<feature type="site" description="Increases basicity of active site His" evidence="2">
    <location>
        <position position="258"/>
    </location>
</feature>
<feature type="site" description="Transition state stabilizer" evidence="2">
    <location>
        <position position="310"/>
    </location>
</feature>
<comment type="function">
    <text evidence="2">Catalyzes the dehydration of D-galactonate to 2-keto-3-deoxy-D-galactonate.</text>
</comment>
<comment type="catalytic activity">
    <reaction evidence="2">
        <text>D-galactonate = 2-dehydro-3-deoxy-D-galactonate + H2O</text>
        <dbReference type="Rhea" id="RHEA:18649"/>
        <dbReference type="ChEBI" id="CHEBI:12931"/>
        <dbReference type="ChEBI" id="CHEBI:15377"/>
        <dbReference type="ChEBI" id="CHEBI:57989"/>
        <dbReference type="EC" id="4.2.1.6"/>
    </reaction>
</comment>
<comment type="cofactor">
    <cofactor evidence="2">
        <name>Mg(2+)</name>
        <dbReference type="ChEBI" id="CHEBI:18420"/>
    </cofactor>
    <text evidence="2">Binds 1 Mg(2+) ion per subunit.</text>
</comment>
<comment type="pathway">
    <text evidence="2">Carbohydrate acid metabolism; D-galactonate degradation; D-glyceraldehyde 3-phosphate and pyruvate from D-galactonate: step 1/3.</text>
</comment>
<comment type="miscellaneous">
    <text evidence="2">Reaction proceeds via an anti dehydration.</text>
</comment>
<comment type="similarity">
    <text evidence="2">Belongs to the mandelate racemase/muconate lactonizing enzyme family. GalD subfamily.</text>
</comment>
<sequence length="382" mass="41986">MKITRLTTYHAAPRWLFLKVETDEGITGWGEPVIEGRARSVEAAVHELAGYVVGKDPARINDLWQTLYRAGFYRGGAILMSAIAGIDQALWDIKGKTLGVPVYELLGGLVRDRMKTYRWVGGDRPGAIIQQITDYRALGFDTFKFNGTEEMKLIDSARAVDAAVVKVAEIREAFGNSIDFGIDFHGRVGAPMAKALLRELEPFKPLFVEEPVLAEQAEYYPRLAASTSIPLAAGERMFSRFEFKNVLCAGGIGMVQPDLSHAGGITECVKIAAMAEAYDVGFAPHCPLGPIALAACLHVDFVSHNAVLQEQSIGIHYNEGADLLDYVINKDDFHCVDGSIAALPKPGLGVEIDEEMLKRTNENPPDWRNPVWRHSDGSIAEW</sequence>
<evidence type="ECO:0000250" key="1"/>
<evidence type="ECO:0000255" key="2">
    <source>
        <dbReference type="HAMAP-Rule" id="MF_01289"/>
    </source>
</evidence>
<evidence type="ECO:0000256" key="3">
    <source>
        <dbReference type="SAM" id="MobiDB-lite"/>
    </source>
</evidence>
<protein>
    <recommendedName>
        <fullName evidence="2">D-galactonate dehydratase</fullName>
        <shortName evidence="2">GalD</shortName>
        <ecNumber evidence="2">4.2.1.6</ecNumber>
    </recommendedName>
</protein>
<proteinExistence type="inferred from homology"/>
<accession>Q3BUN6</accession>
<keyword id="KW-0456">Lyase</keyword>
<keyword id="KW-0460">Magnesium</keyword>
<keyword id="KW-0479">Metal-binding</keyword>
<reference key="1">
    <citation type="journal article" date="2005" name="J. Bacteriol.">
        <title>Insights into genome plasticity and pathogenicity of the plant pathogenic Bacterium Xanthomonas campestris pv. vesicatoria revealed by the complete genome sequence.</title>
        <authorList>
            <person name="Thieme F."/>
            <person name="Koebnik R."/>
            <person name="Bekel T."/>
            <person name="Berger C."/>
            <person name="Boch J."/>
            <person name="Buettner D."/>
            <person name="Caldana C."/>
            <person name="Gaigalat L."/>
            <person name="Goesmann A."/>
            <person name="Kay S."/>
            <person name="Kirchner O."/>
            <person name="Lanz C."/>
            <person name="Linke B."/>
            <person name="McHardy A.C."/>
            <person name="Meyer F."/>
            <person name="Mittenhuber G."/>
            <person name="Nies D.H."/>
            <person name="Niesbach-Kloesgen U."/>
            <person name="Patschkowski T."/>
            <person name="Rueckert C."/>
            <person name="Rupp O."/>
            <person name="Schneiker S."/>
            <person name="Schuster S.C."/>
            <person name="Vorhoelter F.J."/>
            <person name="Weber E."/>
            <person name="Puehler A."/>
            <person name="Bonas U."/>
            <person name="Bartels D."/>
            <person name="Kaiser O."/>
        </authorList>
    </citation>
    <scope>NUCLEOTIDE SEQUENCE [LARGE SCALE GENOMIC DNA]</scope>
    <source>
        <strain>85-10</strain>
    </source>
</reference>
<dbReference type="EC" id="4.2.1.6" evidence="2"/>
<dbReference type="EMBL" id="AM039952">
    <property type="protein sequence ID" value="CAJ23473.1"/>
    <property type="molecule type" value="Genomic_DNA"/>
</dbReference>
<dbReference type="RefSeq" id="WP_011347125.1">
    <property type="nucleotide sequence ID" value="NZ_CP017190.1"/>
</dbReference>
<dbReference type="SMR" id="Q3BUN6"/>
<dbReference type="STRING" id="456327.BJD11_13545"/>
<dbReference type="KEGG" id="xcv:XCV1796"/>
<dbReference type="eggNOG" id="COG4948">
    <property type="taxonomic scope" value="Bacteria"/>
</dbReference>
<dbReference type="HOGENOM" id="CLU_030273_3_2_6"/>
<dbReference type="UniPathway" id="UPA00081">
    <property type="reaction ID" value="UER00518"/>
</dbReference>
<dbReference type="Proteomes" id="UP000007069">
    <property type="component" value="Chromosome"/>
</dbReference>
<dbReference type="GO" id="GO:0008869">
    <property type="term" value="F:galactonate dehydratase activity"/>
    <property type="evidence" value="ECO:0007669"/>
    <property type="project" value="UniProtKB-UniRule"/>
</dbReference>
<dbReference type="GO" id="GO:0000287">
    <property type="term" value="F:magnesium ion binding"/>
    <property type="evidence" value="ECO:0007669"/>
    <property type="project" value="UniProtKB-UniRule"/>
</dbReference>
<dbReference type="GO" id="GO:0009063">
    <property type="term" value="P:amino acid catabolic process"/>
    <property type="evidence" value="ECO:0007669"/>
    <property type="project" value="InterPro"/>
</dbReference>
<dbReference type="GO" id="GO:0034194">
    <property type="term" value="P:D-galactonate catabolic process"/>
    <property type="evidence" value="ECO:0007669"/>
    <property type="project" value="UniProtKB-UniRule"/>
</dbReference>
<dbReference type="CDD" id="cd03325">
    <property type="entry name" value="D-galactonate_dehydratase"/>
    <property type="match status" value="1"/>
</dbReference>
<dbReference type="FunFam" id="3.30.390.10:FF:000003">
    <property type="entry name" value="D-galactonate dehydratase"/>
    <property type="match status" value="1"/>
</dbReference>
<dbReference type="Gene3D" id="3.20.20.120">
    <property type="entry name" value="Enolase-like C-terminal domain"/>
    <property type="match status" value="1"/>
</dbReference>
<dbReference type="Gene3D" id="3.30.390.10">
    <property type="entry name" value="Enolase-like, N-terminal domain"/>
    <property type="match status" value="1"/>
</dbReference>
<dbReference type="HAMAP" id="MF_01289">
    <property type="entry name" value="Galacton_dehydrat"/>
    <property type="match status" value="1"/>
</dbReference>
<dbReference type="InterPro" id="IPR034593">
    <property type="entry name" value="DgoD-like"/>
</dbReference>
<dbReference type="InterPro" id="IPR036849">
    <property type="entry name" value="Enolase-like_C_sf"/>
</dbReference>
<dbReference type="InterPro" id="IPR029017">
    <property type="entry name" value="Enolase-like_N"/>
</dbReference>
<dbReference type="InterPro" id="IPR029065">
    <property type="entry name" value="Enolase_C-like"/>
</dbReference>
<dbReference type="InterPro" id="IPR023592">
    <property type="entry name" value="Galactonate_deHydtase"/>
</dbReference>
<dbReference type="InterPro" id="IPR018110">
    <property type="entry name" value="Mandel_Rmase/mucon_lact_enz_CS"/>
</dbReference>
<dbReference type="InterPro" id="IPR013342">
    <property type="entry name" value="Mandelate_racemase_C"/>
</dbReference>
<dbReference type="InterPro" id="IPR013341">
    <property type="entry name" value="Mandelate_racemase_N_dom"/>
</dbReference>
<dbReference type="NCBIfam" id="NF010624">
    <property type="entry name" value="PRK14017.1"/>
    <property type="match status" value="1"/>
</dbReference>
<dbReference type="PANTHER" id="PTHR48080:SF2">
    <property type="entry name" value="D-GALACTONATE DEHYDRATASE"/>
    <property type="match status" value="1"/>
</dbReference>
<dbReference type="PANTHER" id="PTHR48080">
    <property type="entry name" value="D-GALACTONATE DEHYDRATASE-RELATED"/>
    <property type="match status" value="1"/>
</dbReference>
<dbReference type="Pfam" id="PF13378">
    <property type="entry name" value="MR_MLE_C"/>
    <property type="match status" value="1"/>
</dbReference>
<dbReference type="Pfam" id="PF02746">
    <property type="entry name" value="MR_MLE_N"/>
    <property type="match status" value="1"/>
</dbReference>
<dbReference type="SFLD" id="SFLDF00003">
    <property type="entry name" value="D-galactonate_dehydratase"/>
    <property type="match status" value="1"/>
</dbReference>
<dbReference type="SFLD" id="SFLDS00001">
    <property type="entry name" value="Enolase"/>
    <property type="match status" value="1"/>
</dbReference>
<dbReference type="SMART" id="SM00922">
    <property type="entry name" value="MR_MLE"/>
    <property type="match status" value="1"/>
</dbReference>
<dbReference type="SUPFAM" id="SSF51604">
    <property type="entry name" value="Enolase C-terminal domain-like"/>
    <property type="match status" value="1"/>
</dbReference>
<dbReference type="SUPFAM" id="SSF54826">
    <property type="entry name" value="Enolase N-terminal domain-like"/>
    <property type="match status" value="1"/>
</dbReference>
<dbReference type="PROSITE" id="PS00908">
    <property type="entry name" value="MR_MLE_1"/>
    <property type="match status" value="1"/>
</dbReference>
<dbReference type="PROSITE" id="PS00909">
    <property type="entry name" value="MR_MLE_2"/>
    <property type="match status" value="1"/>
</dbReference>
<name>DGOD_XANE5</name>
<organism>
    <name type="scientific">Xanthomonas euvesicatoria pv. vesicatoria (strain 85-10)</name>
    <name type="common">Xanthomonas campestris pv. vesicatoria</name>
    <dbReference type="NCBI Taxonomy" id="316273"/>
    <lineage>
        <taxon>Bacteria</taxon>
        <taxon>Pseudomonadati</taxon>
        <taxon>Pseudomonadota</taxon>
        <taxon>Gammaproteobacteria</taxon>
        <taxon>Lysobacterales</taxon>
        <taxon>Lysobacteraceae</taxon>
        <taxon>Xanthomonas</taxon>
    </lineage>
</organism>
<gene>
    <name evidence="2" type="primary">dgoD</name>
    <name type="ordered locus">XCV1796</name>
</gene>